<reference key="1">
    <citation type="submission" date="2007-10" db="EMBL/GenBank/DDBJ databases">
        <title>Complete sequence of Salinispora arenicola CNS-205.</title>
        <authorList>
            <consortium name="US DOE Joint Genome Institute"/>
            <person name="Copeland A."/>
            <person name="Lucas S."/>
            <person name="Lapidus A."/>
            <person name="Barry K."/>
            <person name="Glavina del Rio T."/>
            <person name="Dalin E."/>
            <person name="Tice H."/>
            <person name="Pitluck S."/>
            <person name="Foster B."/>
            <person name="Schmutz J."/>
            <person name="Larimer F."/>
            <person name="Land M."/>
            <person name="Hauser L."/>
            <person name="Kyrpides N."/>
            <person name="Ivanova N."/>
            <person name="Jensen P.R."/>
            <person name="Moore B.S."/>
            <person name="Penn K."/>
            <person name="Jenkins C."/>
            <person name="Udwary D."/>
            <person name="Xiang L."/>
            <person name="Gontang E."/>
            <person name="Richardson P."/>
        </authorList>
    </citation>
    <scope>NUCLEOTIDE SEQUENCE [LARGE SCALE GENOMIC DNA]</scope>
    <source>
        <strain>CNS-205</strain>
    </source>
</reference>
<evidence type="ECO:0000255" key="1">
    <source>
        <dbReference type="HAMAP-Rule" id="MF_00501"/>
    </source>
</evidence>
<evidence type="ECO:0000305" key="2"/>
<keyword id="KW-0479">Metal-binding</keyword>
<keyword id="KW-0687">Ribonucleoprotein</keyword>
<keyword id="KW-0689">Ribosomal protein</keyword>
<keyword id="KW-0694">RNA-binding</keyword>
<keyword id="KW-0699">rRNA-binding</keyword>
<keyword id="KW-0862">Zinc</keyword>
<dbReference type="EMBL" id="CP000850">
    <property type="protein sequence ID" value="ABV99817.1"/>
    <property type="molecule type" value="Genomic_DNA"/>
</dbReference>
<dbReference type="SMR" id="A8M2K8"/>
<dbReference type="STRING" id="391037.Sare_4027"/>
<dbReference type="KEGG" id="saq:Sare_4027"/>
<dbReference type="PATRIC" id="fig|391037.6.peg.4064"/>
<dbReference type="eggNOG" id="COG0254">
    <property type="taxonomic scope" value="Bacteria"/>
</dbReference>
<dbReference type="HOGENOM" id="CLU_114306_4_0_11"/>
<dbReference type="OrthoDB" id="9803251at2"/>
<dbReference type="GO" id="GO:1990904">
    <property type="term" value="C:ribonucleoprotein complex"/>
    <property type="evidence" value="ECO:0007669"/>
    <property type="project" value="UniProtKB-KW"/>
</dbReference>
<dbReference type="GO" id="GO:0005840">
    <property type="term" value="C:ribosome"/>
    <property type="evidence" value="ECO:0007669"/>
    <property type="project" value="UniProtKB-KW"/>
</dbReference>
<dbReference type="GO" id="GO:0046872">
    <property type="term" value="F:metal ion binding"/>
    <property type="evidence" value="ECO:0007669"/>
    <property type="project" value="UniProtKB-KW"/>
</dbReference>
<dbReference type="GO" id="GO:0019843">
    <property type="term" value="F:rRNA binding"/>
    <property type="evidence" value="ECO:0007669"/>
    <property type="project" value="UniProtKB-KW"/>
</dbReference>
<dbReference type="GO" id="GO:0003735">
    <property type="term" value="F:structural constituent of ribosome"/>
    <property type="evidence" value="ECO:0007669"/>
    <property type="project" value="InterPro"/>
</dbReference>
<dbReference type="GO" id="GO:0006412">
    <property type="term" value="P:translation"/>
    <property type="evidence" value="ECO:0007669"/>
    <property type="project" value="UniProtKB-UniRule"/>
</dbReference>
<dbReference type="Gene3D" id="4.10.830.30">
    <property type="entry name" value="Ribosomal protein L31"/>
    <property type="match status" value="1"/>
</dbReference>
<dbReference type="HAMAP" id="MF_00501">
    <property type="entry name" value="Ribosomal_bL31_1"/>
    <property type="match status" value="1"/>
</dbReference>
<dbReference type="InterPro" id="IPR034704">
    <property type="entry name" value="Ribosomal_bL28/bL31-like_sf"/>
</dbReference>
<dbReference type="InterPro" id="IPR002150">
    <property type="entry name" value="Ribosomal_bL31"/>
</dbReference>
<dbReference type="InterPro" id="IPR027491">
    <property type="entry name" value="Ribosomal_bL31_A"/>
</dbReference>
<dbReference type="InterPro" id="IPR042105">
    <property type="entry name" value="Ribosomal_bL31_sf"/>
</dbReference>
<dbReference type="NCBIfam" id="TIGR00105">
    <property type="entry name" value="L31"/>
    <property type="match status" value="1"/>
</dbReference>
<dbReference type="NCBIfam" id="NF000612">
    <property type="entry name" value="PRK00019.1"/>
    <property type="match status" value="1"/>
</dbReference>
<dbReference type="NCBIfam" id="NF001809">
    <property type="entry name" value="PRK00528.1"/>
    <property type="match status" value="1"/>
</dbReference>
<dbReference type="PANTHER" id="PTHR33280">
    <property type="entry name" value="50S RIBOSOMAL PROTEIN L31, CHLOROPLASTIC"/>
    <property type="match status" value="1"/>
</dbReference>
<dbReference type="PANTHER" id="PTHR33280:SF1">
    <property type="entry name" value="LARGE RIBOSOMAL SUBUNIT PROTEIN BL31C"/>
    <property type="match status" value="1"/>
</dbReference>
<dbReference type="Pfam" id="PF01197">
    <property type="entry name" value="Ribosomal_L31"/>
    <property type="match status" value="1"/>
</dbReference>
<dbReference type="PRINTS" id="PR01249">
    <property type="entry name" value="RIBOSOMALL31"/>
</dbReference>
<dbReference type="SUPFAM" id="SSF143800">
    <property type="entry name" value="L28p-like"/>
    <property type="match status" value="1"/>
</dbReference>
<dbReference type="PROSITE" id="PS01143">
    <property type="entry name" value="RIBOSOMAL_L31"/>
    <property type="match status" value="1"/>
</dbReference>
<accession>A8M2K8</accession>
<gene>
    <name evidence="1" type="primary">rpmE</name>
    <name type="ordered locus">Sare_4027</name>
</gene>
<proteinExistence type="inferred from homology"/>
<comment type="function">
    <text evidence="1">Binds the 23S rRNA.</text>
</comment>
<comment type="cofactor">
    <cofactor evidence="1">
        <name>Zn(2+)</name>
        <dbReference type="ChEBI" id="CHEBI:29105"/>
    </cofactor>
    <text evidence="1">Binds 1 zinc ion per subunit.</text>
</comment>
<comment type="subunit">
    <text evidence="1">Part of the 50S ribosomal subunit.</text>
</comment>
<comment type="similarity">
    <text evidence="1">Belongs to the bacterial ribosomal protein bL31 family. Type A subfamily.</text>
</comment>
<organism>
    <name type="scientific">Salinispora arenicola (strain CNS-205)</name>
    <dbReference type="NCBI Taxonomy" id="391037"/>
    <lineage>
        <taxon>Bacteria</taxon>
        <taxon>Bacillati</taxon>
        <taxon>Actinomycetota</taxon>
        <taxon>Actinomycetes</taxon>
        <taxon>Micromonosporales</taxon>
        <taxon>Micromonosporaceae</taxon>
        <taxon>Salinispora</taxon>
    </lineage>
</organism>
<name>RL31_SALAI</name>
<sequence length="74" mass="8123">MKPNIHPEYVTTEVTCSCGNTFTTRSTAKGGSIHVETCSACHPFYTGKQRVLDTAGRVAKFQQKYAKVQAKKGK</sequence>
<protein>
    <recommendedName>
        <fullName evidence="1">Large ribosomal subunit protein bL31</fullName>
    </recommendedName>
    <alternativeName>
        <fullName evidence="2">50S ribosomal protein L31</fullName>
    </alternativeName>
</protein>
<feature type="chain" id="PRO_1000126715" description="Large ribosomal subunit protein bL31">
    <location>
        <begin position="1"/>
        <end position="74"/>
    </location>
</feature>
<feature type="binding site" evidence="1">
    <location>
        <position position="16"/>
    </location>
    <ligand>
        <name>Zn(2+)</name>
        <dbReference type="ChEBI" id="CHEBI:29105"/>
    </ligand>
</feature>
<feature type="binding site" evidence="1">
    <location>
        <position position="18"/>
    </location>
    <ligand>
        <name>Zn(2+)</name>
        <dbReference type="ChEBI" id="CHEBI:29105"/>
    </ligand>
</feature>
<feature type="binding site" evidence="1">
    <location>
        <position position="38"/>
    </location>
    <ligand>
        <name>Zn(2+)</name>
        <dbReference type="ChEBI" id="CHEBI:29105"/>
    </ligand>
</feature>
<feature type="binding site" evidence="1">
    <location>
        <position position="41"/>
    </location>
    <ligand>
        <name>Zn(2+)</name>
        <dbReference type="ChEBI" id="CHEBI:29105"/>
    </ligand>
</feature>